<accession>P86819</accession>
<sequence>PPGFTPFRIY</sequence>
<dbReference type="GO" id="GO:0005576">
    <property type="term" value="C:extracellular region"/>
    <property type="evidence" value="ECO:0007669"/>
    <property type="project" value="UniProtKB-SubCell"/>
</dbReference>
<dbReference type="GO" id="GO:0090729">
    <property type="term" value="F:toxin activity"/>
    <property type="evidence" value="ECO:0007669"/>
    <property type="project" value="UniProtKB-KW"/>
</dbReference>
<dbReference type="GO" id="GO:0006952">
    <property type="term" value="P:defense response"/>
    <property type="evidence" value="ECO:0007669"/>
    <property type="project" value="UniProtKB-KW"/>
</dbReference>
<dbReference type="GO" id="GO:0042311">
    <property type="term" value="P:vasodilation"/>
    <property type="evidence" value="ECO:0007669"/>
    <property type="project" value="UniProtKB-KW"/>
</dbReference>
<name>BRK9_PHYSG</name>
<feature type="peptide" id="PRO_0000404694" description="Des-Arg1-[Thr6]-phyllokinin" evidence="2">
    <location>
        <begin position="1"/>
        <end position="10"/>
    </location>
</feature>
<feature type="site" description="Not sulfated" evidence="2">
    <location>
        <position position="10"/>
    </location>
</feature>
<reference evidence="4" key="1">
    <citation type="submission" date="2010-09" db="UniProtKB">
        <title>Bradykinin-related peptides in skin secretion of Physalaemus signifer (Girard, 1853) (Anura, Leiuperidae).</title>
        <authorList>
            <person name="Rates B."/>
            <person name="Ireno I.C."/>
            <person name="Canelas M.A."/>
            <person name="de Lima M.E."/>
            <person name="Pimenta A.M.C."/>
        </authorList>
    </citation>
    <scope>PROTEIN SEQUENCE</scope>
    <scope>SUBCELLULAR LOCATION</scope>
    <scope>TISSUE SPECIFICITY</scope>
    <source>
        <tissue evidence="2">Skin secretion</tissue>
    </source>
</reference>
<comment type="function">
    <text evidence="1">Produces in vitro relaxation of rat arterial smooth muscle and constriction of intestinal smooth muscle (By similarity). May target bradykinin receptors (BDKRB).</text>
</comment>
<comment type="subcellular location">
    <subcellularLocation>
        <location evidence="2">Secreted</location>
    </subcellularLocation>
</comment>
<comment type="tissue specificity">
    <text evidence="2">Expressed by the skin glands.</text>
</comment>
<comment type="similarity">
    <text evidence="4">Belongs to the bradykinin-related peptide family.</text>
</comment>
<proteinExistence type="evidence at protein level"/>
<keyword id="KW-0878">Amphibian defense peptide</keyword>
<keyword id="KW-0903">Direct protein sequencing</keyword>
<keyword id="KW-1213">G-protein coupled receptor impairing toxin</keyword>
<keyword id="KW-0964">Secreted</keyword>
<keyword id="KW-0800">Toxin</keyword>
<keyword id="KW-0838">Vasoactive</keyword>
<keyword id="KW-0840">Vasodilator</keyword>
<protein>
    <recommendedName>
        <fullName>Des-Arg1-[Thr6]-phyllokinin</fullName>
        <shortName evidence="3">Des-Arg-[Thr6]-phyllokinin</shortName>
    </recommendedName>
</protein>
<organism>
    <name type="scientific">Physalaemus signifer</name>
    <name type="common">Girard's dwarf frog</name>
    <dbReference type="NCBI Taxonomy" id="364768"/>
    <lineage>
        <taxon>Eukaryota</taxon>
        <taxon>Metazoa</taxon>
        <taxon>Chordata</taxon>
        <taxon>Craniata</taxon>
        <taxon>Vertebrata</taxon>
        <taxon>Euteleostomi</taxon>
        <taxon>Amphibia</taxon>
        <taxon>Batrachia</taxon>
        <taxon>Anura</taxon>
        <taxon>Neobatrachia</taxon>
        <taxon>Hyloidea</taxon>
        <taxon>Leptodactylidae</taxon>
        <taxon>Leiuperinae</taxon>
        <taxon>Physalaemus</taxon>
    </lineage>
</organism>
<evidence type="ECO:0000250" key="1"/>
<evidence type="ECO:0000269" key="2">
    <source ref="1"/>
</evidence>
<evidence type="ECO:0000303" key="3">
    <source ref="1"/>
</evidence>
<evidence type="ECO:0000305" key="4"/>